<proteinExistence type="inferred from homology"/>
<name>ST7_CALJA</name>
<organism>
    <name type="scientific">Callithrix jacchus</name>
    <name type="common">White-tufted-ear marmoset</name>
    <dbReference type="NCBI Taxonomy" id="9483"/>
    <lineage>
        <taxon>Eukaryota</taxon>
        <taxon>Metazoa</taxon>
        <taxon>Chordata</taxon>
        <taxon>Craniata</taxon>
        <taxon>Vertebrata</taxon>
        <taxon>Euteleostomi</taxon>
        <taxon>Mammalia</taxon>
        <taxon>Eutheria</taxon>
        <taxon>Euarchontoglires</taxon>
        <taxon>Primates</taxon>
        <taxon>Haplorrhini</taxon>
        <taxon>Platyrrhini</taxon>
        <taxon>Cebidae</taxon>
        <taxon>Callitrichinae</taxon>
        <taxon>Callithrix</taxon>
        <taxon>Callithrix</taxon>
    </lineage>
</organism>
<protein>
    <recommendedName>
        <fullName>Suppressor of tumorigenicity 7 protein</fullName>
    </recommendedName>
</protein>
<feature type="chain" id="PRO_0000339193" description="Suppressor of tumorigenicity 7 protein">
    <location>
        <begin position="1"/>
        <end position="585"/>
    </location>
</feature>
<feature type="transmembrane region" description="Helical" evidence="2">
    <location>
        <begin position="15"/>
        <end position="35"/>
    </location>
</feature>
<feature type="transmembrane region" description="Helical" evidence="2">
    <location>
        <begin position="62"/>
        <end position="82"/>
    </location>
</feature>
<feature type="transmembrane region" description="Helical" evidence="2">
    <location>
        <begin position="512"/>
        <end position="532"/>
    </location>
</feature>
<feature type="modified residue" description="Phosphoserine" evidence="1">
    <location>
        <position position="386"/>
    </location>
</feature>
<feature type="glycosylation site" description="N-linked (GlcNAc...) asparagine" evidence="2">
    <location>
        <position position="47"/>
    </location>
</feature>
<keyword id="KW-0325">Glycoprotein</keyword>
<keyword id="KW-0472">Membrane</keyword>
<keyword id="KW-0597">Phosphoprotein</keyword>
<keyword id="KW-1185">Reference proteome</keyword>
<keyword id="KW-0812">Transmembrane</keyword>
<keyword id="KW-1133">Transmembrane helix</keyword>
<reference key="1">
    <citation type="submission" date="2006-10" db="EMBL/GenBank/DDBJ databases">
        <title>NISC comparative sequencing initiative.</title>
        <authorList>
            <person name="Antonellis A."/>
            <person name="Ayele K."/>
            <person name="Benjamin B."/>
            <person name="Blakesley R.W."/>
            <person name="Boakye A."/>
            <person name="Bouffard G.G."/>
            <person name="Brinkley C."/>
            <person name="Brooks S."/>
            <person name="Chu G."/>
            <person name="Coleman H."/>
            <person name="Engle J."/>
            <person name="Gestole M."/>
            <person name="Greene A."/>
            <person name="Guan X."/>
            <person name="Gupta J."/>
            <person name="Haghighi P."/>
            <person name="Han J."/>
            <person name="Hansen N."/>
            <person name="Ho S.-L."/>
            <person name="Hu P."/>
            <person name="Hunter G."/>
            <person name="Hurle B."/>
            <person name="Idol J.R."/>
            <person name="Kwong P."/>
            <person name="Laric P."/>
            <person name="Larson S."/>
            <person name="Lee-Lin S.-Q."/>
            <person name="Legaspi R."/>
            <person name="Madden M."/>
            <person name="Maduro Q.L."/>
            <person name="Maduro V.B."/>
            <person name="Margulies E.H."/>
            <person name="Masiello C."/>
            <person name="Maskeri B."/>
            <person name="McDowell J."/>
            <person name="Mojidi H.A."/>
            <person name="Mullikin J.C."/>
            <person name="Oestreicher J.S."/>
            <person name="Park M."/>
            <person name="Portnoy M.E."/>
            <person name="Prasad A."/>
            <person name="Puri O."/>
            <person name="Reddix-Dugue N."/>
            <person name="Schandler K."/>
            <person name="Schueler M.G."/>
            <person name="Sison C."/>
            <person name="Stantripop S."/>
            <person name="Stephen E."/>
            <person name="Taye A."/>
            <person name="Thomas J.W."/>
            <person name="Thomas P.J."/>
            <person name="Tsipouri V."/>
            <person name="Ung L."/>
            <person name="Vogt J.L."/>
            <person name="Wetherby K.D."/>
            <person name="Young A."/>
            <person name="Green E.D."/>
        </authorList>
    </citation>
    <scope>NUCLEOTIDE SEQUENCE [LARGE SCALE GENOMIC DNA]</scope>
</reference>
<accession>Q2QLG2</accession>
<sequence>MAEAGTGFLEQLKSCIVWSWTYLWTVWFFIVLFLVYILRVPLKINDNLSTVSMFLNTLTPKFYVALTGTSSLISGLILIFEWWYFRKYGTSFIEQVSVSHLRPLLGGVDNNSSNNSNSSNGDSDSNRQSVSECKVWRNPLNLFRGAEYNRYTWVTGREPLTYYDMNLSAQDHQTFFTCDSDHLRPADAIMQKAWRERNPQARISAAHEALEINEIRSRVEVPLIASSTIWEIKLLPKCATAYILLAEEEATTIAEAEKLFKQALKAGDGCYRRSQQLQHHGSQYEAQHRRDTNVLVYIKRRLAMCARRLGRTREAVKMMRDLMKEFPLLSMFNIHENLLEALLELQAYADVQAVLAKYDDISLPKSATICYTAALLKARAVSDKFSPEAASRRGLSTAEMNAVEAIHRAVEFNPHVPKYLLEMKSLILPPEHILKRGDSEAIAYAFFHLAHWKRVEGALNLLHCTWEGTFRMIPYPLEKGHLFYPYPICTETADRELLPSFHEVSVYPKKELPFFILFTAGLCSFTAMLALLTHQFPELMGVFAKAMIDIFCSAEFRDWNCKSIFMRVEDELEIPPASQSQHFQN</sequence>
<comment type="subcellular location">
    <subcellularLocation>
        <location evidence="3">Membrane</location>
        <topology evidence="3">Multi-pass membrane protein</topology>
    </subcellularLocation>
</comment>
<comment type="similarity">
    <text evidence="3">Belongs to the ST7 family.</text>
</comment>
<dbReference type="EMBL" id="DP000014">
    <property type="protein sequence ID" value="ABA90394.1"/>
    <property type="molecule type" value="Genomic_DNA"/>
</dbReference>
<dbReference type="RefSeq" id="XP_009000990.1">
    <property type="nucleotide sequence ID" value="XM_009002742.4"/>
</dbReference>
<dbReference type="FunCoup" id="Q2QLG2">
    <property type="interactions" value="1360"/>
</dbReference>
<dbReference type="GlyCosmos" id="Q2QLG2">
    <property type="glycosylation" value="1 site, No reported glycans"/>
</dbReference>
<dbReference type="Ensembl" id="ENSCJAT00000009753.4">
    <property type="protein sequence ID" value="ENSCJAP00000009226.3"/>
    <property type="gene ID" value="ENSCJAG00000004988.5"/>
</dbReference>
<dbReference type="GeneID" id="100409994"/>
<dbReference type="KEGG" id="cjc:100409994"/>
<dbReference type="CTD" id="7982"/>
<dbReference type="eggNOG" id="KOG3807">
    <property type="taxonomic scope" value="Eukaryota"/>
</dbReference>
<dbReference type="GeneTree" id="ENSGT00390000000873"/>
<dbReference type="InParanoid" id="Q2QLG2"/>
<dbReference type="OMA" id="DRCATAY"/>
<dbReference type="OrthoDB" id="5914722at2759"/>
<dbReference type="Proteomes" id="UP000008225">
    <property type="component" value="Chromosome 8"/>
</dbReference>
<dbReference type="Bgee" id="ENSCJAG00000004988">
    <property type="expression patterns" value="Expressed in liver and 6 other cell types or tissues"/>
</dbReference>
<dbReference type="GO" id="GO:0016020">
    <property type="term" value="C:membrane"/>
    <property type="evidence" value="ECO:0007669"/>
    <property type="project" value="UniProtKB-SubCell"/>
</dbReference>
<dbReference type="CDD" id="cd11557">
    <property type="entry name" value="ST7"/>
    <property type="match status" value="1"/>
</dbReference>
<dbReference type="InterPro" id="IPR007311">
    <property type="entry name" value="ST7"/>
</dbReference>
<dbReference type="PANTHER" id="PTHR12745">
    <property type="entry name" value="SUPPRESSION OF TUMORIGENICITY 7"/>
    <property type="match status" value="1"/>
</dbReference>
<dbReference type="PANTHER" id="PTHR12745:SF10">
    <property type="entry name" value="SUPPRESSOR OF TUMORIGENICITY 7 PROTEIN"/>
    <property type="match status" value="1"/>
</dbReference>
<dbReference type="Pfam" id="PF04184">
    <property type="entry name" value="ST7"/>
    <property type="match status" value="1"/>
</dbReference>
<evidence type="ECO:0000250" key="1">
    <source>
        <dbReference type="UniProtKB" id="Q9NRC1"/>
    </source>
</evidence>
<evidence type="ECO:0000255" key="2"/>
<evidence type="ECO:0000305" key="3"/>
<gene>
    <name type="primary">ST7</name>
</gene>